<dbReference type="EMBL" id="EF672564">
    <property type="protein sequence ID" value="ABV53237.1"/>
    <property type="molecule type" value="Genomic_RNA"/>
</dbReference>
<dbReference type="Proteomes" id="UP000001456">
    <property type="component" value="Genome"/>
</dbReference>
<dbReference type="GO" id="GO:0030430">
    <property type="term" value="C:host cell cytoplasm"/>
    <property type="evidence" value="ECO:0007669"/>
    <property type="project" value="UniProtKB-UniRule"/>
</dbReference>
<dbReference type="GO" id="GO:0044163">
    <property type="term" value="C:host cytoskeleton"/>
    <property type="evidence" value="ECO:0007669"/>
    <property type="project" value="UniProtKB-SubCell"/>
</dbReference>
<dbReference type="GO" id="GO:0046872">
    <property type="term" value="F:metal ion binding"/>
    <property type="evidence" value="ECO:0007669"/>
    <property type="project" value="UniProtKB-UniRule"/>
</dbReference>
<dbReference type="GO" id="GO:0003723">
    <property type="term" value="F:RNA binding"/>
    <property type="evidence" value="ECO:0007669"/>
    <property type="project" value="UniProtKB-UniRule"/>
</dbReference>
<dbReference type="GO" id="GO:0039548">
    <property type="term" value="P:symbiont-mediated suppression of host cytoplasmic pattern recognition receptor signaling pathway via inhibition of IRF3 activity"/>
    <property type="evidence" value="ECO:0007669"/>
    <property type="project" value="UniProtKB-UniRule"/>
</dbReference>
<dbReference type="GO" id="GO:0039557">
    <property type="term" value="P:symbiont-mediated suppression of host cytoplasmic pattern recognition receptor signaling pathway via inhibition of IRF7 activity"/>
    <property type="evidence" value="ECO:0007669"/>
    <property type="project" value="UniProtKB-UniRule"/>
</dbReference>
<dbReference type="HAMAP" id="MF_04088">
    <property type="entry name" value="ROTA_NSP1"/>
    <property type="match status" value="1"/>
</dbReference>
<dbReference type="InterPro" id="IPR002148">
    <property type="entry name" value="Rotavirus_NSP1"/>
</dbReference>
<dbReference type="Pfam" id="PF00981">
    <property type="entry name" value="Rota_NS53"/>
    <property type="match status" value="1"/>
</dbReference>
<proteinExistence type="inferred from homology"/>
<keyword id="KW-1035">Host cytoplasm</keyword>
<keyword id="KW-1037">Host cytoskeleton</keyword>
<keyword id="KW-0945">Host-virus interaction</keyword>
<keyword id="KW-1090">Inhibition of host innate immune response by virus</keyword>
<keyword id="KW-1092">Inhibition of host IRF3 by virus</keyword>
<keyword id="KW-1093">Inhibition of host IRF7 by virus</keyword>
<keyword id="KW-1113">Inhibition of host RLR pathway by virus</keyword>
<keyword id="KW-0922">Interferon antiviral system evasion</keyword>
<keyword id="KW-0479">Metal-binding</keyword>
<keyword id="KW-0694">RNA-binding</keyword>
<keyword id="KW-0899">Viral immunoevasion</keyword>
<evidence type="ECO:0000255" key="1">
    <source>
        <dbReference type="HAMAP-Rule" id="MF_04088"/>
    </source>
</evidence>
<protein>
    <recommendedName>
        <fullName evidence="1">Non-structural protein 1</fullName>
        <shortName evidence="1">NSP1</shortName>
    </recommendedName>
    <alternativeName>
        <fullName evidence="1">NCVP2</fullName>
    </alternativeName>
    <alternativeName>
        <fullName evidence="1">Non-structural RNA-binding protein 53</fullName>
        <shortName evidence="1">NS53</shortName>
    </alternativeName>
</protein>
<comment type="function">
    <text evidence="1">Plays a role in the inhibition of host innate immunity by inducing the degradation of key host factors required to activate interferon production such as IRF3, IRF5 or IRF7. Associates with components of cullin RING ligases (CRLs) including CUL1 or CUL3, which are essential multisubunit ubiquitination complexes, to modulate their activities.</text>
</comment>
<comment type="subunit">
    <text evidence="1">Interacts (via C-terminus) with host IRF3; this interaction leads to IRF3 degradation. Interacts with host IRF7; this interaction leads to IRF7 degradation. Interacts with host CUL1 and CUL3.</text>
</comment>
<comment type="subcellular location">
    <subcellularLocation>
        <location evidence="1">Host cytoplasm</location>
        <location evidence="1">Host cytoskeleton</location>
    </subcellularLocation>
</comment>
<comment type="domain">
    <text evidence="1">The integrity of the zinc-binding domain in NSP1 is important for degradation of host IRF3.</text>
</comment>
<comment type="domain">
    <text evidence="1">The pLxIS motif targets host IRF3 for degradation; however phosphorylation of NSP1 pLxIS motif is not required for its activity.</text>
</comment>
<comment type="similarity">
    <text evidence="1">Belongs to the rotavirus NSP1 family.</text>
</comment>
<organismHost>
    <name type="scientific">Homo sapiens</name>
    <name type="common">Human</name>
    <dbReference type="NCBI Taxonomy" id="9606"/>
</organismHost>
<feature type="chain" id="PRO_0000369075" description="Non-structural protein 1">
    <location>
        <begin position="1"/>
        <end position="491"/>
    </location>
</feature>
<feature type="region of interest" description="RNA-binding" evidence="1">
    <location>
        <begin position="1"/>
        <end position="81"/>
    </location>
</feature>
<feature type="region of interest" description="Zinc-binding domain" evidence="1">
    <location>
        <begin position="42"/>
        <end position="79"/>
    </location>
</feature>
<feature type="region of interest" description="Important for cytoskeleton localization" evidence="1">
    <location>
        <begin position="82"/>
        <end position="176"/>
    </location>
</feature>
<feature type="region of interest" description="Interaction with host IRF3" evidence="1">
    <location>
        <begin position="320"/>
        <end position="491"/>
    </location>
</feature>
<feature type="short sequence motif" description="pLxIS motif" evidence="1">
    <location>
        <begin position="485"/>
        <end position="488"/>
    </location>
</feature>
<organism>
    <name type="scientific">Rotavirus A (isolate RVA/Human/United Kingdom/A64/1987/G10P11[14])</name>
    <name type="common">RV-A</name>
    <dbReference type="NCBI Taxonomy" id="578827"/>
    <lineage>
        <taxon>Viruses</taxon>
        <taxon>Riboviria</taxon>
        <taxon>Orthornavirae</taxon>
        <taxon>Duplornaviricota</taxon>
        <taxon>Resentoviricetes</taxon>
        <taxon>Reovirales</taxon>
        <taxon>Sedoreoviridae</taxon>
        <taxon>Rotavirus</taxon>
        <taxon>Rotavirus A</taxon>
    </lineage>
</organism>
<sequence length="491" mass="58595">MATFKDACYHYKKLNKLNNLVLKLGANDEWRPAPVTKYKGWCLDCCQYTNLTYCRGCALYHVCQWCSQYNRCFLDEEPHLLRMRTFKDAVTKEDIEGLLTMYETLFPINEKLVNKFINSVKQRKCRNEYLLEWYNHLLMPITLQALTINLEDNVYHIFGYYDCMEHENQTPFQFINLLEKYDKLLLDDRNFNRMSHLPVILQQEYALRYFSKSRFLSKGKKRLSRNDFSDNLMEDRHSPTSLMQVVRNCISIHINDCEWNKACTLIFDARNYISIMNSSYTEHYSVSQRCKLFTKYKFGIVSRLVKPNYIFSSHESCALNVHNCKWCQINNHYKVWEDFRLRKIYNNIMDFIRALVKSNGNVGHCSSQESVYEYISDLFLICKTGKWNEAVEMLFNYLEPVDINGTEYVLLDYEVNWEVRGLVMQNMDGKVPRILNMNDTKKILSAMIFDWFDTRYMRETPMTTSTTNQLRTLNKRNELIDEYDLELSDVE</sequence>
<name>NSP1_ROTH7</name>
<reference key="1">
    <citation type="journal article" date="2008" name="J. Virol.">
        <title>Group A human rotavirus genomics: evidence that gene constellations are influenced by viral protein interactions.</title>
        <authorList>
            <person name="Heiman E.M."/>
            <person name="McDonald S.M."/>
            <person name="Barro M."/>
            <person name="Taraporewala Z.F."/>
            <person name="Bar-Magen T."/>
            <person name="Patton J.T."/>
        </authorList>
    </citation>
    <scope>NUCLEOTIDE SEQUENCE [GENOMIC RNA]</scope>
</reference>
<accession>B3SRR2</accession>